<comment type="similarity">
    <text evidence="2">Belongs to the UPF0758 family.</text>
</comment>
<protein>
    <recommendedName>
        <fullName>UPF0758 protein VP0184</fullName>
    </recommendedName>
</protein>
<keyword id="KW-0378">Hydrolase</keyword>
<keyword id="KW-0479">Metal-binding</keyword>
<keyword id="KW-0482">Metalloprotease</keyword>
<keyword id="KW-0645">Protease</keyword>
<keyword id="KW-0862">Zinc</keyword>
<accession>Q87T86</accession>
<sequence>MILKALPNESMPREKLLQRGPQALTDAELLAIFLRTGTQGMNVIELADFLIQDFGSLRQLFSASEQEFCQHKGLGQAKYVQLQAVLEMTQRYLAETLKRGDALTSPEQTKLYLSSILRDRQREAFYILFLDNQHRVIKDEILFEGTLDAASVYPREVVKRALHHNAAALILAHNHPSGVAEPSQADRRITRRLIDALALVDIRILDHFVIGDGESVSFAERGWI</sequence>
<reference key="1">
    <citation type="journal article" date="2003" name="Lancet">
        <title>Genome sequence of Vibrio parahaemolyticus: a pathogenic mechanism distinct from that of V. cholerae.</title>
        <authorList>
            <person name="Makino K."/>
            <person name="Oshima K."/>
            <person name="Kurokawa K."/>
            <person name="Yokoyama K."/>
            <person name="Uda T."/>
            <person name="Tagomori K."/>
            <person name="Iijima Y."/>
            <person name="Najima M."/>
            <person name="Nakano M."/>
            <person name="Yamashita A."/>
            <person name="Kubota Y."/>
            <person name="Kimura S."/>
            <person name="Yasunaga T."/>
            <person name="Honda T."/>
            <person name="Shinagawa H."/>
            <person name="Hattori M."/>
            <person name="Iida T."/>
        </authorList>
    </citation>
    <scope>NUCLEOTIDE SEQUENCE [LARGE SCALE GENOMIC DNA]</scope>
    <source>
        <strain>RIMD 2210633</strain>
    </source>
</reference>
<name>Y184_VIBPA</name>
<gene>
    <name type="ordered locus">VP0184</name>
</gene>
<dbReference type="EMBL" id="BA000031">
    <property type="protein sequence ID" value="BAC58447.1"/>
    <property type="molecule type" value="Genomic_DNA"/>
</dbReference>
<dbReference type="RefSeq" id="NP_796563.1">
    <property type="nucleotide sequence ID" value="NC_004603.1"/>
</dbReference>
<dbReference type="SMR" id="Q87T86"/>
<dbReference type="GeneID" id="1187651"/>
<dbReference type="KEGG" id="vpa:VP0184"/>
<dbReference type="PATRIC" id="fig|223926.6.peg.176"/>
<dbReference type="eggNOG" id="COG2003">
    <property type="taxonomic scope" value="Bacteria"/>
</dbReference>
<dbReference type="HOGENOM" id="CLU_073529_0_1_6"/>
<dbReference type="Proteomes" id="UP000002493">
    <property type="component" value="Chromosome 1"/>
</dbReference>
<dbReference type="GO" id="GO:0046872">
    <property type="term" value="F:metal ion binding"/>
    <property type="evidence" value="ECO:0007669"/>
    <property type="project" value="UniProtKB-KW"/>
</dbReference>
<dbReference type="GO" id="GO:0008237">
    <property type="term" value="F:metallopeptidase activity"/>
    <property type="evidence" value="ECO:0007669"/>
    <property type="project" value="UniProtKB-KW"/>
</dbReference>
<dbReference type="GO" id="GO:0006508">
    <property type="term" value="P:proteolysis"/>
    <property type="evidence" value="ECO:0007669"/>
    <property type="project" value="UniProtKB-KW"/>
</dbReference>
<dbReference type="CDD" id="cd08071">
    <property type="entry name" value="MPN_DUF2466"/>
    <property type="match status" value="1"/>
</dbReference>
<dbReference type="FunFam" id="3.40.140.10:FF:000032">
    <property type="entry name" value="DNA repair protein RadC"/>
    <property type="match status" value="1"/>
</dbReference>
<dbReference type="Gene3D" id="1.10.150.20">
    <property type="entry name" value="5' to 3' exonuclease, C-terminal subdomain"/>
    <property type="match status" value="1"/>
</dbReference>
<dbReference type="Gene3D" id="3.40.140.10">
    <property type="entry name" value="Cytidine Deaminase, domain 2"/>
    <property type="match status" value="1"/>
</dbReference>
<dbReference type="InterPro" id="IPR037518">
    <property type="entry name" value="MPN"/>
</dbReference>
<dbReference type="InterPro" id="IPR025657">
    <property type="entry name" value="RadC_JAB"/>
</dbReference>
<dbReference type="InterPro" id="IPR010994">
    <property type="entry name" value="RuvA_2-like"/>
</dbReference>
<dbReference type="InterPro" id="IPR001405">
    <property type="entry name" value="UPF0758"/>
</dbReference>
<dbReference type="InterPro" id="IPR020891">
    <property type="entry name" value="UPF0758_CS"/>
</dbReference>
<dbReference type="InterPro" id="IPR046778">
    <property type="entry name" value="UPF0758_N"/>
</dbReference>
<dbReference type="NCBIfam" id="NF000642">
    <property type="entry name" value="PRK00024.1"/>
    <property type="match status" value="1"/>
</dbReference>
<dbReference type="NCBIfam" id="TIGR00608">
    <property type="entry name" value="radc"/>
    <property type="match status" value="1"/>
</dbReference>
<dbReference type="PANTHER" id="PTHR30471">
    <property type="entry name" value="DNA REPAIR PROTEIN RADC"/>
    <property type="match status" value="1"/>
</dbReference>
<dbReference type="PANTHER" id="PTHR30471:SF3">
    <property type="entry name" value="UPF0758 PROTEIN YEES-RELATED"/>
    <property type="match status" value="1"/>
</dbReference>
<dbReference type="Pfam" id="PF04002">
    <property type="entry name" value="RadC"/>
    <property type="match status" value="1"/>
</dbReference>
<dbReference type="Pfam" id="PF20582">
    <property type="entry name" value="UPF0758_N"/>
    <property type="match status" value="1"/>
</dbReference>
<dbReference type="SUPFAM" id="SSF102712">
    <property type="entry name" value="JAB1/MPN domain"/>
    <property type="match status" value="1"/>
</dbReference>
<dbReference type="SUPFAM" id="SSF47781">
    <property type="entry name" value="RuvA domain 2-like"/>
    <property type="match status" value="1"/>
</dbReference>
<dbReference type="PROSITE" id="PS50249">
    <property type="entry name" value="MPN"/>
    <property type="match status" value="1"/>
</dbReference>
<dbReference type="PROSITE" id="PS01302">
    <property type="entry name" value="UPF0758"/>
    <property type="match status" value="1"/>
</dbReference>
<proteinExistence type="inferred from homology"/>
<organism>
    <name type="scientific">Vibrio parahaemolyticus serotype O3:K6 (strain RIMD 2210633)</name>
    <dbReference type="NCBI Taxonomy" id="223926"/>
    <lineage>
        <taxon>Bacteria</taxon>
        <taxon>Pseudomonadati</taxon>
        <taxon>Pseudomonadota</taxon>
        <taxon>Gammaproteobacteria</taxon>
        <taxon>Vibrionales</taxon>
        <taxon>Vibrionaceae</taxon>
        <taxon>Vibrio</taxon>
    </lineage>
</organism>
<evidence type="ECO:0000255" key="1">
    <source>
        <dbReference type="PROSITE-ProRule" id="PRU01182"/>
    </source>
</evidence>
<evidence type="ECO:0000305" key="2"/>
<feature type="chain" id="PRO_0000190751" description="UPF0758 protein VP0184">
    <location>
        <begin position="1"/>
        <end position="224"/>
    </location>
</feature>
<feature type="domain" description="MPN" evidence="1">
    <location>
        <begin position="102"/>
        <end position="224"/>
    </location>
</feature>
<feature type="short sequence motif" description="JAMM motif" evidence="1">
    <location>
        <begin position="173"/>
        <end position="186"/>
    </location>
</feature>
<feature type="binding site" evidence="1">
    <location>
        <position position="173"/>
    </location>
    <ligand>
        <name>Zn(2+)</name>
        <dbReference type="ChEBI" id="CHEBI:29105"/>
        <note>catalytic</note>
    </ligand>
</feature>
<feature type="binding site" evidence="1">
    <location>
        <position position="175"/>
    </location>
    <ligand>
        <name>Zn(2+)</name>
        <dbReference type="ChEBI" id="CHEBI:29105"/>
        <note>catalytic</note>
    </ligand>
</feature>
<feature type="binding site" evidence="1">
    <location>
        <position position="186"/>
    </location>
    <ligand>
        <name>Zn(2+)</name>
        <dbReference type="ChEBI" id="CHEBI:29105"/>
        <note>catalytic</note>
    </ligand>
</feature>